<dbReference type="EMBL" id="CP001164">
    <property type="protein sequence ID" value="ACI34741.1"/>
    <property type="molecule type" value="Genomic_DNA"/>
</dbReference>
<dbReference type="RefSeq" id="WP_001076742.1">
    <property type="nucleotide sequence ID" value="NC_011353.1"/>
</dbReference>
<dbReference type="SMR" id="B5YZ52"/>
<dbReference type="GeneID" id="75204588"/>
<dbReference type="KEGG" id="ecf:ECH74115_5369"/>
<dbReference type="HOGENOM" id="CLU_013430_3_0_6"/>
<dbReference type="GO" id="GO:0005886">
    <property type="term" value="C:plasma membrane"/>
    <property type="evidence" value="ECO:0007669"/>
    <property type="project" value="UniProtKB-SubCell"/>
</dbReference>
<dbReference type="GO" id="GO:0015086">
    <property type="term" value="F:cadmium ion transmembrane transporter activity"/>
    <property type="evidence" value="ECO:0007669"/>
    <property type="project" value="UniProtKB-UniRule"/>
</dbReference>
<dbReference type="GO" id="GO:0015093">
    <property type="term" value="F:ferrous iron transmembrane transporter activity"/>
    <property type="evidence" value="ECO:0007669"/>
    <property type="project" value="TreeGrafter"/>
</dbReference>
<dbReference type="GO" id="GO:0046872">
    <property type="term" value="F:metal ion binding"/>
    <property type="evidence" value="ECO:0007669"/>
    <property type="project" value="UniProtKB-KW"/>
</dbReference>
<dbReference type="GO" id="GO:0015341">
    <property type="term" value="F:zinc efflux antiporter activity"/>
    <property type="evidence" value="ECO:0007669"/>
    <property type="project" value="TreeGrafter"/>
</dbReference>
<dbReference type="GO" id="GO:0006882">
    <property type="term" value="P:intracellular zinc ion homeostasis"/>
    <property type="evidence" value="ECO:0007669"/>
    <property type="project" value="TreeGrafter"/>
</dbReference>
<dbReference type="FunFam" id="1.20.1510.10:FF:000001">
    <property type="entry name" value="Ferrous-iron efflux pump FieF"/>
    <property type="match status" value="1"/>
</dbReference>
<dbReference type="FunFam" id="3.30.70.1350:FF:000002">
    <property type="entry name" value="Ferrous-iron efflux pump FieF"/>
    <property type="match status" value="1"/>
</dbReference>
<dbReference type="Gene3D" id="1.20.1510.10">
    <property type="entry name" value="Cation efflux protein transmembrane domain"/>
    <property type="match status" value="1"/>
</dbReference>
<dbReference type="Gene3D" id="3.30.70.1350">
    <property type="entry name" value="Cation efflux protein, cytoplasmic domain"/>
    <property type="match status" value="1"/>
</dbReference>
<dbReference type="HAMAP" id="MF_01425">
    <property type="entry name" value="Cation_efflux_FieF"/>
    <property type="match status" value="1"/>
</dbReference>
<dbReference type="InterPro" id="IPR002524">
    <property type="entry name" value="Cation_efflux"/>
</dbReference>
<dbReference type="InterPro" id="IPR027470">
    <property type="entry name" value="Cation_efflux_CTD"/>
</dbReference>
<dbReference type="InterPro" id="IPR036837">
    <property type="entry name" value="Cation_efflux_CTD_sf"/>
</dbReference>
<dbReference type="InterPro" id="IPR023783">
    <property type="entry name" value="Cation_efflux_FieF"/>
</dbReference>
<dbReference type="InterPro" id="IPR027469">
    <property type="entry name" value="Cation_efflux_TMD_sf"/>
</dbReference>
<dbReference type="InterPro" id="IPR050291">
    <property type="entry name" value="CDF_Transporter"/>
</dbReference>
<dbReference type="NCBIfam" id="TIGR01297">
    <property type="entry name" value="CDF"/>
    <property type="match status" value="1"/>
</dbReference>
<dbReference type="NCBIfam" id="NF007064">
    <property type="entry name" value="PRK09509.1"/>
    <property type="match status" value="1"/>
</dbReference>
<dbReference type="PANTHER" id="PTHR43840:SF41">
    <property type="entry name" value="CATION-EFFLUX PUMP FIEF"/>
    <property type="match status" value="1"/>
</dbReference>
<dbReference type="PANTHER" id="PTHR43840">
    <property type="entry name" value="MITOCHONDRIAL METAL TRANSPORTER 1-RELATED"/>
    <property type="match status" value="1"/>
</dbReference>
<dbReference type="Pfam" id="PF01545">
    <property type="entry name" value="Cation_efflux"/>
    <property type="match status" value="1"/>
</dbReference>
<dbReference type="Pfam" id="PF16916">
    <property type="entry name" value="ZT_dimer"/>
    <property type="match status" value="1"/>
</dbReference>
<dbReference type="SUPFAM" id="SSF160240">
    <property type="entry name" value="Cation efflux protein cytoplasmic domain-like"/>
    <property type="match status" value="1"/>
</dbReference>
<dbReference type="SUPFAM" id="SSF161111">
    <property type="entry name" value="Cation efflux protein transmembrane domain-like"/>
    <property type="match status" value="1"/>
</dbReference>
<name>FIEF_ECO5E</name>
<comment type="function">
    <text evidence="1">Divalent metal cation transporter which exports Zn(2+), Cd(2+) and possibly Fe(2+). May be involved in zinc and iron detoxification by efflux.</text>
</comment>
<comment type="catalytic activity">
    <reaction evidence="1">
        <text>Zn(2+)(in) + H(+)(out) = Zn(2+)(out) + H(+)(in)</text>
        <dbReference type="Rhea" id="RHEA:28839"/>
        <dbReference type="ChEBI" id="CHEBI:15378"/>
        <dbReference type="ChEBI" id="CHEBI:29105"/>
    </reaction>
</comment>
<comment type="catalytic activity">
    <reaction evidence="1">
        <text>Cd(2+)(in) + H(+)(out) = Cd(2+)(out) + H(+)(in)</text>
        <dbReference type="Rhea" id="RHEA:28739"/>
        <dbReference type="ChEBI" id="CHEBI:15378"/>
        <dbReference type="ChEBI" id="CHEBI:48775"/>
    </reaction>
</comment>
<comment type="catalytic activity">
    <reaction evidence="1">
        <text>Fe(2+)(in) + H(+)(out) = Fe(2+)(out) + H(+)(in)</text>
        <dbReference type="Rhea" id="RHEA:29439"/>
        <dbReference type="ChEBI" id="CHEBI:15378"/>
        <dbReference type="ChEBI" id="CHEBI:29033"/>
    </reaction>
</comment>
<comment type="subunit">
    <text evidence="1">Homodimer.</text>
</comment>
<comment type="subcellular location">
    <subcellularLocation>
        <location evidence="1">Cell inner membrane</location>
        <topology evidence="1">Multi-pass membrane protein</topology>
    </subcellularLocation>
</comment>
<comment type="similarity">
    <text evidence="1">Belongs to the cation diffusion facilitator (CDF) transporter (TC 2.A.4) family. FieF subfamily.</text>
</comment>
<organism>
    <name type="scientific">Escherichia coli O157:H7 (strain EC4115 / EHEC)</name>
    <dbReference type="NCBI Taxonomy" id="444450"/>
    <lineage>
        <taxon>Bacteria</taxon>
        <taxon>Pseudomonadati</taxon>
        <taxon>Pseudomonadota</taxon>
        <taxon>Gammaproteobacteria</taxon>
        <taxon>Enterobacterales</taxon>
        <taxon>Enterobacteriaceae</taxon>
        <taxon>Escherichia</taxon>
    </lineage>
</organism>
<feature type="chain" id="PRO_1000145690" description="Cation-efflux pump FieF">
    <location>
        <begin position="1"/>
        <end position="300"/>
    </location>
</feature>
<feature type="transmembrane region" description="Helical" evidence="1">
    <location>
        <begin position="12"/>
        <end position="32"/>
    </location>
</feature>
<feature type="transmembrane region" description="Helical" evidence="1">
    <location>
        <begin position="39"/>
        <end position="59"/>
    </location>
</feature>
<feature type="transmembrane region" description="Helical" evidence="1">
    <location>
        <begin position="82"/>
        <end position="102"/>
    </location>
</feature>
<feature type="transmembrane region" description="Helical" evidence="1">
    <location>
        <begin position="114"/>
        <end position="134"/>
    </location>
</feature>
<feature type="transmembrane region" description="Helical" evidence="1">
    <location>
        <begin position="156"/>
        <end position="176"/>
    </location>
</feature>
<feature type="transmembrane region" description="Helical" evidence="1">
    <location>
        <begin position="178"/>
        <end position="198"/>
    </location>
</feature>
<feature type="binding site" evidence="1">
    <location>
        <position position="45"/>
    </location>
    <ligand>
        <name>Zn(2+)</name>
        <dbReference type="ChEBI" id="CHEBI:29105"/>
    </ligand>
</feature>
<feature type="binding site" evidence="1">
    <location>
        <position position="49"/>
    </location>
    <ligand>
        <name>Zn(2+)</name>
        <dbReference type="ChEBI" id="CHEBI:29105"/>
    </ligand>
</feature>
<feature type="binding site" evidence="1">
    <location>
        <position position="153"/>
    </location>
    <ligand>
        <name>Zn(2+)</name>
        <dbReference type="ChEBI" id="CHEBI:29105"/>
    </ligand>
</feature>
<feature type="binding site" evidence="1">
    <location>
        <position position="157"/>
    </location>
    <ligand>
        <name>Zn(2+)</name>
        <dbReference type="ChEBI" id="CHEBI:29105"/>
    </ligand>
</feature>
<sequence length="300" mass="32927">MNQSYGRLVSRAAIAATAMASLLLLIKIFAWWYTGSVSILAALVDSLVDIGASLTNLLVVRYSLQPADDNHSFGHGKAESLAALAQSMFISGSALFLFLTGIQHLISPTPMTDPGVGVIVTIVALICTIILVSFQRWVVRRTQSQAVRADMLHYQSDVMMNGAILLALGLSWYGWHRADALFALGIGIYILYSALRMGYEAVQSLLDRALPDEERQEIIDIVTSWPGVSGAHDLRTRQSGPTRFIQIHLEMEDSLPLVQAHMVADQVEQAILRRFPGSDVIIHQDPCSVVPREGKRSMLS</sequence>
<accession>B5YZ52</accession>
<reference key="1">
    <citation type="journal article" date="2011" name="Proc. Natl. Acad. Sci. U.S.A.">
        <title>Genomic anatomy of Escherichia coli O157:H7 outbreaks.</title>
        <authorList>
            <person name="Eppinger M."/>
            <person name="Mammel M.K."/>
            <person name="Leclerc J.E."/>
            <person name="Ravel J."/>
            <person name="Cebula T.A."/>
        </authorList>
    </citation>
    <scope>NUCLEOTIDE SEQUENCE [LARGE SCALE GENOMIC DNA]</scope>
    <source>
        <strain>EC4115 / EHEC</strain>
    </source>
</reference>
<proteinExistence type="inferred from homology"/>
<gene>
    <name evidence="1" type="primary">fieF</name>
    <name type="ordered locus">ECH74115_5369</name>
</gene>
<evidence type="ECO:0000255" key="1">
    <source>
        <dbReference type="HAMAP-Rule" id="MF_01425"/>
    </source>
</evidence>
<keyword id="KW-0997">Cell inner membrane</keyword>
<keyword id="KW-1003">Cell membrane</keyword>
<keyword id="KW-0406">Ion transport</keyword>
<keyword id="KW-0408">Iron</keyword>
<keyword id="KW-0410">Iron transport</keyword>
<keyword id="KW-0472">Membrane</keyword>
<keyword id="KW-0479">Metal-binding</keyword>
<keyword id="KW-0812">Transmembrane</keyword>
<keyword id="KW-1133">Transmembrane helix</keyword>
<keyword id="KW-0813">Transport</keyword>
<keyword id="KW-0862">Zinc</keyword>
<keyword id="KW-0864">Zinc transport</keyword>
<protein>
    <recommendedName>
        <fullName evidence="1">Cation-efflux pump FieF</fullName>
    </recommendedName>
</protein>